<feature type="chain" id="PRO_0000280045" description="Probable splicing factor YJU2B">
    <location>
        <begin position="1"/>
        <end position="400"/>
    </location>
</feature>
<feature type="region of interest" description="Disordered" evidence="4">
    <location>
        <begin position="1"/>
        <end position="26"/>
    </location>
</feature>
<feature type="region of interest" description="Disordered" evidence="4">
    <location>
        <begin position="255"/>
        <end position="400"/>
    </location>
</feature>
<feature type="coiled-coil region" evidence="3">
    <location>
        <begin position="182"/>
        <end position="214"/>
    </location>
</feature>
<feature type="compositionally biased region" description="Polar residues" evidence="4">
    <location>
        <begin position="283"/>
        <end position="292"/>
    </location>
</feature>
<feature type="compositionally biased region" description="Polar residues" evidence="4">
    <location>
        <begin position="327"/>
        <end position="341"/>
    </location>
</feature>
<feature type="compositionally biased region" description="Pro residues" evidence="4">
    <location>
        <begin position="364"/>
        <end position="380"/>
    </location>
</feature>
<feature type="modified residue" description="Phosphoserine" evidence="1">
    <location>
        <position position="40"/>
    </location>
</feature>
<feature type="modified residue" description="Phosphoserine" evidence="1">
    <location>
        <position position="310"/>
    </location>
</feature>
<feature type="splice variant" id="VSP_023517" description="In isoform 2." evidence="5">
    <location>
        <begin position="371"/>
        <end position="388"/>
    </location>
</feature>
<feature type="sequence conflict" description="In Ref. 1; AAX08765." evidence="6" ref="1">
    <original>E</original>
    <variation>D</variation>
    <location>
        <position position="322"/>
    </location>
</feature>
<protein>
    <recommendedName>
        <fullName evidence="6">Probable splicing factor YJU2B</fullName>
    </recommendedName>
    <alternativeName>
        <fullName>Coiled-coil domain-containing protein 130</fullName>
    </alternativeName>
</protein>
<evidence type="ECO:0000250" key="1">
    <source>
        <dbReference type="UniProtKB" id="P13994"/>
    </source>
</evidence>
<evidence type="ECO:0000250" key="2">
    <source>
        <dbReference type="UniProtKB" id="Q9BW85"/>
    </source>
</evidence>
<evidence type="ECO:0000255" key="3"/>
<evidence type="ECO:0000256" key="4">
    <source>
        <dbReference type="SAM" id="MobiDB-lite"/>
    </source>
</evidence>
<evidence type="ECO:0000303" key="5">
    <source>
    </source>
</evidence>
<evidence type="ECO:0000305" key="6"/>
<proteinExistence type="evidence at transcript level"/>
<keyword id="KW-0025">Alternative splicing</keyword>
<keyword id="KW-0175">Coiled coil</keyword>
<keyword id="KW-0539">Nucleus</keyword>
<keyword id="KW-0597">Phosphoprotein</keyword>
<keyword id="KW-1185">Reference proteome</keyword>
<name>YJU2B_BOVIN</name>
<reference key="1">
    <citation type="journal article" date="2005" name="BMC Genomics">
        <title>Characterization of 954 bovine full-CDS cDNA sequences.</title>
        <authorList>
            <person name="Harhay G.P."/>
            <person name="Sonstegard T.S."/>
            <person name="Keele J.W."/>
            <person name="Heaton M.P."/>
            <person name="Clawson M.L."/>
            <person name="Snelling W.M."/>
            <person name="Wiedmann R.T."/>
            <person name="Van Tassell C.P."/>
            <person name="Smith T.P.L."/>
        </authorList>
    </citation>
    <scope>NUCLEOTIDE SEQUENCE [LARGE SCALE MRNA] (ISOFORMS 1 AND 2)</scope>
</reference>
<reference key="2">
    <citation type="submission" date="2006-02" db="EMBL/GenBank/DDBJ databases">
        <authorList>
            <consortium name="NIH - Mammalian Gene Collection (MGC) project"/>
        </authorList>
    </citation>
    <scope>NUCLEOTIDE SEQUENCE [LARGE SCALE MRNA] (ISOFORM 1)</scope>
    <source>
        <strain>Hereford</strain>
        <tissue>Uterus</tissue>
    </source>
</reference>
<dbReference type="EMBL" id="BT020695">
    <property type="protein sequence ID" value="AAX08712.1"/>
    <property type="molecule type" value="mRNA"/>
</dbReference>
<dbReference type="EMBL" id="BT020732">
    <property type="protein sequence ID" value="AAX08749.1"/>
    <property type="molecule type" value="mRNA"/>
</dbReference>
<dbReference type="EMBL" id="BT020748">
    <property type="protein sequence ID" value="AAX08765.1"/>
    <property type="molecule type" value="mRNA"/>
</dbReference>
<dbReference type="EMBL" id="BC113236">
    <property type="protein sequence ID" value="AAI13237.1"/>
    <property type="molecule type" value="mRNA"/>
</dbReference>
<dbReference type="RefSeq" id="NP_001069812.1">
    <molecule id="Q5EA37-1"/>
    <property type="nucleotide sequence ID" value="NM_001076344.2"/>
</dbReference>
<dbReference type="RefSeq" id="XP_024850361.1">
    <molecule id="Q5EA37-1"/>
    <property type="nucleotide sequence ID" value="XM_024994593.2"/>
</dbReference>
<dbReference type="RefSeq" id="XP_059744363.1">
    <molecule id="Q5EA37-1"/>
    <property type="nucleotide sequence ID" value="XM_059888380.1"/>
</dbReference>
<dbReference type="SMR" id="Q5EA37"/>
<dbReference type="FunCoup" id="Q5EA37">
    <property type="interactions" value="4650"/>
</dbReference>
<dbReference type="STRING" id="9913.ENSBTAP00000003269"/>
<dbReference type="PaxDb" id="9913-ENSBTAP00000003269"/>
<dbReference type="Ensembl" id="ENSBTAT00000003269.7">
    <molecule id="Q5EA37-1"/>
    <property type="protein sequence ID" value="ENSBTAP00000003269.6"/>
    <property type="gene ID" value="ENSBTAG00000002516.7"/>
</dbReference>
<dbReference type="GeneID" id="614791"/>
<dbReference type="KEGG" id="bta:614791"/>
<dbReference type="CTD" id="81576"/>
<dbReference type="VEuPathDB" id="HostDB:ENSBTAG00000002516"/>
<dbReference type="eggNOG" id="KOG2990">
    <property type="taxonomic scope" value="Eukaryota"/>
</dbReference>
<dbReference type="GeneTree" id="ENSGT00530000063615"/>
<dbReference type="InParanoid" id="Q5EA37"/>
<dbReference type="OMA" id="RNMSVWD"/>
<dbReference type="OrthoDB" id="360327at2759"/>
<dbReference type="Proteomes" id="UP000009136">
    <property type="component" value="Chromosome 7"/>
</dbReference>
<dbReference type="Bgee" id="ENSBTAG00000002516">
    <property type="expression patterns" value="Expressed in laryngeal cartilage and 104 other cell types or tissues"/>
</dbReference>
<dbReference type="GO" id="GO:0071014">
    <property type="term" value="C:post-mRNA release spliceosomal complex"/>
    <property type="evidence" value="ECO:0000318"/>
    <property type="project" value="GO_Central"/>
</dbReference>
<dbReference type="GO" id="GO:0005684">
    <property type="term" value="C:U2-type spliceosomal complex"/>
    <property type="evidence" value="ECO:0000318"/>
    <property type="project" value="GO_Central"/>
</dbReference>
<dbReference type="GO" id="GO:0000398">
    <property type="term" value="P:mRNA splicing, via spliceosome"/>
    <property type="evidence" value="ECO:0007669"/>
    <property type="project" value="InterPro"/>
</dbReference>
<dbReference type="GO" id="GO:0009615">
    <property type="term" value="P:response to virus"/>
    <property type="evidence" value="ECO:0007669"/>
    <property type="project" value="Ensembl"/>
</dbReference>
<dbReference type="GO" id="GO:0008380">
    <property type="term" value="P:RNA splicing"/>
    <property type="evidence" value="ECO:0000318"/>
    <property type="project" value="GO_Central"/>
</dbReference>
<dbReference type="InterPro" id="IPR007590">
    <property type="entry name" value="Saf4/Yju2"/>
</dbReference>
<dbReference type="PANTHER" id="PTHR12111">
    <property type="entry name" value="SPLICING FACTOR YJU2"/>
    <property type="match status" value="1"/>
</dbReference>
<dbReference type="PANTHER" id="PTHR12111:SF2">
    <property type="entry name" value="SPLICING FACTOR YJU2B-RELATED"/>
    <property type="match status" value="1"/>
</dbReference>
<dbReference type="Pfam" id="PF04502">
    <property type="entry name" value="Saf4_Yju2"/>
    <property type="match status" value="1"/>
</dbReference>
<accession>Q5EA37</accession>
<accession>Q5EA21</accession>
<sequence>MGERKGVNKYYPPDFNPEKHGSLNRYHNSHPLRERARKLSQGILIIRFEMPYNIWCDGCKNHIGMGVRYNAEKKKVGNYYTTPIYRFRMKCHLCVNYIEMQTDPANCDYVIVSGAQRKEERWDMEDNEQVLTTEHEKKQKLEMDAMFRLEHGEADRSTLKKALPTLSHIQEAQSAWKDDFALNSMLRKRFREKKKAMQEEEERDQALQAKASLAIPLVPETEDDRRLAALLKFHTLDSYEDKQKLKRTEIISRSWFPSTPGASASSSSSSKTNSVLKKLAQNRRATPTSSPVTMGHLGIVRRRSREVPESPQHVAETFKSGEPQLPEGTNQNRPVSPQDCSLETAETPKNSSALGQEESCQDRPQPPPDTSPEAPNPQDTPQPCSLGSSLVADYSGSESE</sequence>
<organism>
    <name type="scientific">Bos taurus</name>
    <name type="common">Bovine</name>
    <dbReference type="NCBI Taxonomy" id="9913"/>
    <lineage>
        <taxon>Eukaryota</taxon>
        <taxon>Metazoa</taxon>
        <taxon>Chordata</taxon>
        <taxon>Craniata</taxon>
        <taxon>Vertebrata</taxon>
        <taxon>Euteleostomi</taxon>
        <taxon>Mammalia</taxon>
        <taxon>Eutheria</taxon>
        <taxon>Laurasiatheria</taxon>
        <taxon>Artiodactyla</taxon>
        <taxon>Ruminantia</taxon>
        <taxon>Pecora</taxon>
        <taxon>Bovidae</taxon>
        <taxon>Bovinae</taxon>
        <taxon>Bos</taxon>
    </lineage>
</organism>
<comment type="function">
    <text evidence="2">May be involved in mRNA splicing.</text>
</comment>
<comment type="subcellular location">
    <subcellularLocation>
        <location evidence="2">Nucleus</location>
    </subcellularLocation>
</comment>
<comment type="alternative products">
    <event type="alternative splicing"/>
    <isoform>
        <id>Q5EA37-1</id>
        <name>1</name>
        <sequence type="displayed"/>
    </isoform>
    <isoform>
        <id>Q5EA37-2</id>
        <name>2</name>
        <sequence type="described" ref="VSP_023517"/>
    </isoform>
</comment>
<comment type="similarity">
    <text evidence="6">Belongs to the CWC16 family.</text>
</comment>
<gene>
    <name type="primary">YJU2B</name>
    <name type="synonym">CCDC130</name>
</gene>